<comment type="catalytic activity">
    <reaction evidence="1">
        <text>(S)-2,3,4,5-tetrahydrodipicolinate + succinyl-CoA + H2O = (S)-2-succinylamino-6-oxoheptanedioate + CoA</text>
        <dbReference type="Rhea" id="RHEA:17325"/>
        <dbReference type="ChEBI" id="CHEBI:15377"/>
        <dbReference type="ChEBI" id="CHEBI:15685"/>
        <dbReference type="ChEBI" id="CHEBI:16845"/>
        <dbReference type="ChEBI" id="CHEBI:57287"/>
        <dbReference type="ChEBI" id="CHEBI:57292"/>
        <dbReference type="EC" id="2.3.1.117"/>
    </reaction>
</comment>
<comment type="pathway">
    <text evidence="1">Amino-acid biosynthesis; L-lysine biosynthesis via DAP pathway; LL-2,6-diaminopimelate from (S)-tetrahydrodipicolinate (succinylase route): step 1/3.</text>
</comment>
<comment type="subunit">
    <text evidence="1">Homotrimer.</text>
</comment>
<comment type="subcellular location">
    <subcellularLocation>
        <location evidence="1">Cytoplasm</location>
    </subcellularLocation>
</comment>
<comment type="similarity">
    <text evidence="1">Belongs to the transferase hexapeptide repeat family.</text>
</comment>
<dbReference type="EC" id="2.3.1.117" evidence="1"/>
<dbReference type="EMBL" id="BX640443">
    <property type="protein sequence ID" value="CAE32679.1"/>
    <property type="molecule type" value="Genomic_DNA"/>
</dbReference>
<dbReference type="RefSeq" id="WP_003812536.1">
    <property type="nucleotide sequence ID" value="NC_002927.3"/>
</dbReference>
<dbReference type="SMR" id="P0A4U9"/>
<dbReference type="GeneID" id="69602059"/>
<dbReference type="KEGG" id="bbr:BB2183"/>
<dbReference type="eggNOG" id="COG2171">
    <property type="taxonomic scope" value="Bacteria"/>
</dbReference>
<dbReference type="HOGENOM" id="CLU_050859_0_1_4"/>
<dbReference type="UniPathway" id="UPA00034">
    <property type="reaction ID" value="UER00019"/>
</dbReference>
<dbReference type="Proteomes" id="UP000001027">
    <property type="component" value="Chromosome"/>
</dbReference>
<dbReference type="GO" id="GO:0005737">
    <property type="term" value="C:cytoplasm"/>
    <property type="evidence" value="ECO:0007669"/>
    <property type="project" value="UniProtKB-SubCell"/>
</dbReference>
<dbReference type="GO" id="GO:0008666">
    <property type="term" value="F:2,3,4,5-tetrahydropyridine-2,6-dicarboxylate N-succinyltransferase activity"/>
    <property type="evidence" value="ECO:0007669"/>
    <property type="project" value="UniProtKB-UniRule"/>
</dbReference>
<dbReference type="GO" id="GO:0016779">
    <property type="term" value="F:nucleotidyltransferase activity"/>
    <property type="evidence" value="ECO:0007669"/>
    <property type="project" value="TreeGrafter"/>
</dbReference>
<dbReference type="GO" id="GO:0019877">
    <property type="term" value="P:diaminopimelate biosynthetic process"/>
    <property type="evidence" value="ECO:0007669"/>
    <property type="project" value="UniProtKB-UniRule"/>
</dbReference>
<dbReference type="GO" id="GO:0009089">
    <property type="term" value="P:lysine biosynthetic process via diaminopimelate"/>
    <property type="evidence" value="ECO:0007669"/>
    <property type="project" value="UniProtKB-UniRule"/>
</dbReference>
<dbReference type="CDD" id="cd03350">
    <property type="entry name" value="LbH_THP_succinylT"/>
    <property type="match status" value="1"/>
</dbReference>
<dbReference type="Gene3D" id="2.160.10.10">
    <property type="entry name" value="Hexapeptide repeat proteins"/>
    <property type="match status" value="1"/>
</dbReference>
<dbReference type="Gene3D" id="1.10.166.10">
    <property type="entry name" value="Tetrahydrodipicolinate-N-succinyltransferase, N-terminal domain"/>
    <property type="match status" value="1"/>
</dbReference>
<dbReference type="HAMAP" id="MF_00811">
    <property type="entry name" value="DapD"/>
    <property type="match status" value="1"/>
</dbReference>
<dbReference type="InterPro" id="IPR005664">
    <property type="entry name" value="DapD_Trfase_Hexpep_rpt_fam"/>
</dbReference>
<dbReference type="InterPro" id="IPR001451">
    <property type="entry name" value="Hexapep"/>
</dbReference>
<dbReference type="InterPro" id="IPR018357">
    <property type="entry name" value="Hexapep_transf_CS"/>
</dbReference>
<dbReference type="InterPro" id="IPR023180">
    <property type="entry name" value="THP_succinylTrfase_dom1"/>
</dbReference>
<dbReference type="InterPro" id="IPR037133">
    <property type="entry name" value="THP_succinylTrfase_N_sf"/>
</dbReference>
<dbReference type="InterPro" id="IPR011004">
    <property type="entry name" value="Trimer_LpxA-like_sf"/>
</dbReference>
<dbReference type="NCBIfam" id="TIGR00965">
    <property type="entry name" value="dapD"/>
    <property type="match status" value="1"/>
</dbReference>
<dbReference type="NCBIfam" id="NF008808">
    <property type="entry name" value="PRK11830.1"/>
    <property type="match status" value="1"/>
</dbReference>
<dbReference type="PANTHER" id="PTHR19136:SF52">
    <property type="entry name" value="2,3,4,5-TETRAHYDROPYRIDINE-2,6-DICARBOXYLATE N-SUCCINYLTRANSFERASE"/>
    <property type="match status" value="1"/>
</dbReference>
<dbReference type="PANTHER" id="PTHR19136">
    <property type="entry name" value="MOLYBDENUM COFACTOR GUANYLYLTRANSFERASE"/>
    <property type="match status" value="1"/>
</dbReference>
<dbReference type="Pfam" id="PF14602">
    <property type="entry name" value="Hexapep_2"/>
    <property type="match status" value="1"/>
</dbReference>
<dbReference type="Pfam" id="PF14805">
    <property type="entry name" value="THDPS_N_2"/>
    <property type="match status" value="1"/>
</dbReference>
<dbReference type="SUPFAM" id="SSF51161">
    <property type="entry name" value="Trimeric LpxA-like enzymes"/>
    <property type="match status" value="1"/>
</dbReference>
<dbReference type="PROSITE" id="PS00101">
    <property type="entry name" value="HEXAPEP_TRANSFERASES"/>
    <property type="match status" value="1"/>
</dbReference>
<gene>
    <name evidence="1" type="primary">dapD</name>
    <name type="ordered locus">BB2183</name>
</gene>
<feature type="chain" id="PRO_0000196916" description="2,3,4,5-tetrahydropyridine-2,6-dicarboxylate N-succinyltransferase">
    <location>
        <begin position="1"/>
        <end position="273"/>
    </location>
</feature>
<feature type="binding site" evidence="1">
    <location>
        <position position="105"/>
    </location>
    <ligand>
        <name>substrate</name>
    </ligand>
</feature>
<feature type="binding site" evidence="1">
    <location>
        <position position="142"/>
    </location>
    <ligand>
        <name>substrate</name>
    </ligand>
</feature>
<protein>
    <recommendedName>
        <fullName evidence="1">2,3,4,5-tetrahydropyridine-2,6-dicarboxylate N-succinyltransferase</fullName>
        <ecNumber evidence="1">2.3.1.117</ecNumber>
    </recommendedName>
    <alternativeName>
        <fullName evidence="1">Tetrahydrodipicolinate N-succinyltransferase</fullName>
        <shortName evidence="1">THDP succinyltransferase</shortName>
        <shortName evidence="1">THP succinyltransferase</shortName>
        <shortName evidence="1">Tetrahydropicolinate succinylase</shortName>
    </alternativeName>
</protein>
<proteinExistence type="inferred from homology"/>
<name>DAPD_BORBR</name>
<reference key="1">
    <citation type="journal article" date="2003" name="Nat. Genet.">
        <title>Comparative analysis of the genome sequences of Bordetella pertussis, Bordetella parapertussis and Bordetella bronchiseptica.</title>
        <authorList>
            <person name="Parkhill J."/>
            <person name="Sebaihia M."/>
            <person name="Preston A."/>
            <person name="Murphy L.D."/>
            <person name="Thomson N.R."/>
            <person name="Harris D.E."/>
            <person name="Holden M.T.G."/>
            <person name="Churcher C.M."/>
            <person name="Bentley S.D."/>
            <person name="Mungall K.L."/>
            <person name="Cerdeno-Tarraga A.-M."/>
            <person name="Temple L."/>
            <person name="James K.D."/>
            <person name="Harris B."/>
            <person name="Quail M.A."/>
            <person name="Achtman M."/>
            <person name="Atkin R."/>
            <person name="Baker S."/>
            <person name="Basham D."/>
            <person name="Bason N."/>
            <person name="Cherevach I."/>
            <person name="Chillingworth T."/>
            <person name="Collins M."/>
            <person name="Cronin A."/>
            <person name="Davis P."/>
            <person name="Doggett J."/>
            <person name="Feltwell T."/>
            <person name="Goble A."/>
            <person name="Hamlin N."/>
            <person name="Hauser H."/>
            <person name="Holroyd S."/>
            <person name="Jagels K."/>
            <person name="Leather S."/>
            <person name="Moule S."/>
            <person name="Norberczak H."/>
            <person name="O'Neil S."/>
            <person name="Ormond D."/>
            <person name="Price C."/>
            <person name="Rabbinowitsch E."/>
            <person name="Rutter S."/>
            <person name="Sanders M."/>
            <person name="Saunders D."/>
            <person name="Seeger K."/>
            <person name="Sharp S."/>
            <person name="Simmonds M."/>
            <person name="Skelton J."/>
            <person name="Squares R."/>
            <person name="Squares S."/>
            <person name="Stevens K."/>
            <person name="Unwin L."/>
            <person name="Whitehead S."/>
            <person name="Barrell B.G."/>
            <person name="Maskell D.J."/>
        </authorList>
    </citation>
    <scope>NUCLEOTIDE SEQUENCE [LARGE SCALE GENOMIC DNA]</scope>
    <source>
        <strain>ATCC BAA-588 / NCTC 13252 / RB50</strain>
    </source>
</reference>
<keyword id="KW-0012">Acyltransferase</keyword>
<keyword id="KW-0028">Amino-acid biosynthesis</keyword>
<keyword id="KW-0963">Cytoplasm</keyword>
<keyword id="KW-0220">Diaminopimelate biosynthesis</keyword>
<keyword id="KW-0457">Lysine biosynthesis</keyword>
<keyword id="KW-0677">Repeat</keyword>
<keyword id="KW-0808">Transferase</keyword>
<sequence length="273" mass="29264">MTLDLQTTIEQAWENRANLSPVDASAEVRDAVEHTIDGLDLGRLRVAEKIDDQWIVHQWIKKAVLLSFRLHDNAVMGQGPLQFYDKVPTKFAGYGEAAFKAGGYRVVPPAVARRGAFIARNVVLMPSYVNIGAYVDEGTMVDTWATVGSCAQIGKNVHLSGGVGIGGVLEPLQANPTIIEDNCFIGARSEVVEGVVVEENSVLAMGVFLSQSTKIYDRATGKVSYGRVPSGSVVVPGSLPSEDGSHSLACAVIVKRVDAQTRAKTSINDLLRA</sequence>
<evidence type="ECO:0000255" key="1">
    <source>
        <dbReference type="HAMAP-Rule" id="MF_00811"/>
    </source>
</evidence>
<organism>
    <name type="scientific">Bordetella bronchiseptica (strain ATCC BAA-588 / NCTC 13252 / RB50)</name>
    <name type="common">Alcaligenes bronchisepticus</name>
    <dbReference type="NCBI Taxonomy" id="257310"/>
    <lineage>
        <taxon>Bacteria</taxon>
        <taxon>Pseudomonadati</taxon>
        <taxon>Pseudomonadota</taxon>
        <taxon>Betaproteobacteria</taxon>
        <taxon>Burkholderiales</taxon>
        <taxon>Alcaligenaceae</taxon>
        <taxon>Bordetella</taxon>
    </lineage>
</organism>
<accession>P0A4U9</accession>
<accession>Q9ZEX2</accession>